<sequence>MESPDSSSGSAPPRVLRRQQQQPGSAPELPPGFRFHPTDEELVVHYLKKKAASVPLPVTIIAEVDLYKFDPWELPEKANFGEQEWYFFSPRDRKYPNGARPNRAATSGYWKATGTDKPIMASGSTREKVGVKKALVFYRGKPPKGVKTNWIMHEYRLTDTSSSAAAVATTRQPPPPITGGSRGAVSLRLDDWVLCRIYKKTNKAGAGQRSMECEDSVEDAVAAYAPSSQQHATAAAGMAGSDGAGGVAAAHGGDYSSLLHHDSHEDTFLVNGLLTAEDAAGLSTGASSLSQLAAAARAAATPCDATKQLLAPSPTPFNWFEAFLPRAKEFPSGLSRSSRDIGDMSLSSTVDRSLSEAGAVAIDTGDAANGANTMPAFINPLGVQGATYQQHQAIMGASLPSESAAAAAACNFQHPFQLSRVNWDS</sequence>
<feature type="chain" id="PRO_0000420378" description="NAC transcription factor ONAC010">
    <location>
        <begin position="1"/>
        <end position="425"/>
    </location>
</feature>
<feature type="domain" description="NAC" evidence="2">
    <location>
        <begin position="29"/>
        <end position="200"/>
    </location>
</feature>
<feature type="DNA-binding region" evidence="2">
    <location>
        <begin position="129"/>
        <end position="206"/>
    </location>
</feature>
<feature type="region of interest" description="Disordered" evidence="3">
    <location>
        <begin position="1"/>
        <end position="34"/>
    </location>
</feature>
<feature type="compositionally biased region" description="Polar residues" evidence="3">
    <location>
        <begin position="1"/>
        <end position="10"/>
    </location>
</feature>
<feature type="compositionally biased region" description="Low complexity" evidence="3">
    <location>
        <begin position="12"/>
        <end position="23"/>
    </location>
</feature>
<gene>
    <name type="primary">ONAC010</name>
    <name type="ORF">OsI_26514</name>
</gene>
<accession>A2YMR0</accession>
<reference key="1">
    <citation type="journal article" date="2005" name="PLoS Biol.">
        <title>The genomes of Oryza sativa: a history of duplications.</title>
        <authorList>
            <person name="Yu J."/>
            <person name="Wang J."/>
            <person name="Lin W."/>
            <person name="Li S."/>
            <person name="Li H."/>
            <person name="Zhou J."/>
            <person name="Ni P."/>
            <person name="Dong W."/>
            <person name="Hu S."/>
            <person name="Zeng C."/>
            <person name="Zhang J."/>
            <person name="Zhang Y."/>
            <person name="Li R."/>
            <person name="Xu Z."/>
            <person name="Li S."/>
            <person name="Li X."/>
            <person name="Zheng H."/>
            <person name="Cong L."/>
            <person name="Lin L."/>
            <person name="Yin J."/>
            <person name="Geng J."/>
            <person name="Li G."/>
            <person name="Shi J."/>
            <person name="Liu J."/>
            <person name="Lv H."/>
            <person name="Li J."/>
            <person name="Wang J."/>
            <person name="Deng Y."/>
            <person name="Ran L."/>
            <person name="Shi X."/>
            <person name="Wang X."/>
            <person name="Wu Q."/>
            <person name="Li C."/>
            <person name="Ren X."/>
            <person name="Wang J."/>
            <person name="Wang X."/>
            <person name="Li D."/>
            <person name="Liu D."/>
            <person name="Zhang X."/>
            <person name="Ji Z."/>
            <person name="Zhao W."/>
            <person name="Sun Y."/>
            <person name="Zhang Z."/>
            <person name="Bao J."/>
            <person name="Han Y."/>
            <person name="Dong L."/>
            <person name="Ji J."/>
            <person name="Chen P."/>
            <person name="Wu S."/>
            <person name="Liu J."/>
            <person name="Xiao Y."/>
            <person name="Bu D."/>
            <person name="Tan J."/>
            <person name="Yang L."/>
            <person name="Ye C."/>
            <person name="Zhang J."/>
            <person name="Xu J."/>
            <person name="Zhou Y."/>
            <person name="Yu Y."/>
            <person name="Zhang B."/>
            <person name="Zhuang S."/>
            <person name="Wei H."/>
            <person name="Liu B."/>
            <person name="Lei M."/>
            <person name="Yu H."/>
            <person name="Li Y."/>
            <person name="Xu H."/>
            <person name="Wei S."/>
            <person name="He X."/>
            <person name="Fang L."/>
            <person name="Zhang Z."/>
            <person name="Zhang Y."/>
            <person name="Huang X."/>
            <person name="Su Z."/>
            <person name="Tong W."/>
            <person name="Li J."/>
            <person name="Tong Z."/>
            <person name="Li S."/>
            <person name="Ye J."/>
            <person name="Wang L."/>
            <person name="Fang L."/>
            <person name="Lei T."/>
            <person name="Chen C.-S."/>
            <person name="Chen H.-C."/>
            <person name="Xu Z."/>
            <person name="Li H."/>
            <person name="Huang H."/>
            <person name="Zhang F."/>
            <person name="Xu H."/>
            <person name="Li N."/>
            <person name="Zhao C."/>
            <person name="Li S."/>
            <person name="Dong L."/>
            <person name="Huang Y."/>
            <person name="Li L."/>
            <person name="Xi Y."/>
            <person name="Qi Q."/>
            <person name="Li W."/>
            <person name="Zhang B."/>
            <person name="Hu W."/>
            <person name="Zhang Y."/>
            <person name="Tian X."/>
            <person name="Jiao Y."/>
            <person name="Liang X."/>
            <person name="Jin J."/>
            <person name="Gao L."/>
            <person name="Zheng W."/>
            <person name="Hao B."/>
            <person name="Liu S.-M."/>
            <person name="Wang W."/>
            <person name="Yuan L."/>
            <person name="Cao M."/>
            <person name="McDermott J."/>
            <person name="Samudrala R."/>
            <person name="Wang J."/>
            <person name="Wong G.K.-S."/>
            <person name="Yang H."/>
        </authorList>
    </citation>
    <scope>NUCLEOTIDE SEQUENCE [LARGE SCALE GENOMIC DNA]</scope>
    <source>
        <strain>cv. 93-11</strain>
    </source>
</reference>
<evidence type="ECO:0000250" key="1"/>
<evidence type="ECO:0000255" key="2">
    <source>
        <dbReference type="PROSITE-ProRule" id="PRU00353"/>
    </source>
</evidence>
<evidence type="ECO:0000256" key="3">
    <source>
        <dbReference type="SAM" id="MobiDB-lite"/>
    </source>
</evidence>
<evidence type="ECO:0000305" key="4"/>
<comment type="function">
    <text evidence="1">Transcription factor of the NAC family associated with male fertility.</text>
</comment>
<comment type="subcellular location">
    <subcellularLocation>
        <location evidence="4">Nucleus</location>
    </subcellularLocation>
</comment>
<comment type="domain">
    <text>The NAC domain includes a DNA-binding domain and a dimerization domain.</text>
</comment>
<name>NAC10_ORYSI</name>
<keyword id="KW-0238">DNA-binding</keyword>
<keyword id="KW-0539">Nucleus</keyword>
<keyword id="KW-1185">Reference proteome</keyword>
<keyword id="KW-0804">Transcription</keyword>
<keyword id="KW-0805">Transcription regulation</keyword>
<organism>
    <name type="scientific">Oryza sativa subsp. indica</name>
    <name type="common">Rice</name>
    <dbReference type="NCBI Taxonomy" id="39946"/>
    <lineage>
        <taxon>Eukaryota</taxon>
        <taxon>Viridiplantae</taxon>
        <taxon>Streptophyta</taxon>
        <taxon>Embryophyta</taxon>
        <taxon>Tracheophyta</taxon>
        <taxon>Spermatophyta</taxon>
        <taxon>Magnoliopsida</taxon>
        <taxon>Liliopsida</taxon>
        <taxon>Poales</taxon>
        <taxon>Poaceae</taxon>
        <taxon>BOP clade</taxon>
        <taxon>Oryzoideae</taxon>
        <taxon>Oryzeae</taxon>
        <taxon>Oryzinae</taxon>
        <taxon>Oryza</taxon>
        <taxon>Oryza sativa</taxon>
    </lineage>
</organism>
<protein>
    <recommendedName>
        <fullName>NAC transcription factor ONAC010</fullName>
    </recommendedName>
</protein>
<proteinExistence type="inferred from homology"/>
<dbReference type="EMBL" id="CM000132">
    <property type="protein sequence ID" value="EAZ04371.1"/>
    <property type="molecule type" value="Genomic_DNA"/>
</dbReference>
<dbReference type="SMR" id="A2YMR0"/>
<dbReference type="STRING" id="39946.A2YMR0"/>
<dbReference type="EnsemblPlants" id="BGIOSGA024071-TA">
    <property type="protein sequence ID" value="BGIOSGA024071-PA"/>
    <property type="gene ID" value="BGIOSGA024071"/>
</dbReference>
<dbReference type="EnsemblPlants" id="OsIR64_07g0020160.01">
    <property type="protein sequence ID" value="OsIR64_07g0020160.01"/>
    <property type="gene ID" value="OsIR64_07g0020160"/>
</dbReference>
<dbReference type="EnsemblPlants" id="OsKYG_07g0019590.01">
    <property type="protein sequence ID" value="OsKYG_07g0019590.01"/>
    <property type="gene ID" value="OsKYG_07g0019590"/>
</dbReference>
<dbReference type="EnsemblPlants" id="OsLiXu_07g0019710.01">
    <property type="protein sequence ID" value="OsLiXu_07g0019710.01"/>
    <property type="gene ID" value="OsLiXu_07g0019710"/>
</dbReference>
<dbReference type="EnsemblPlants" id="OsMH63_07G019430_01">
    <property type="protein sequence ID" value="OsMH63_07G019430_01"/>
    <property type="gene ID" value="OsMH63_07G019430"/>
</dbReference>
<dbReference type="EnsemblPlants" id="OsPr106_07g0019690.01">
    <property type="protein sequence ID" value="OsPr106_07g0019690.01"/>
    <property type="gene ID" value="OsPr106_07g0019690"/>
</dbReference>
<dbReference type="EnsemblPlants" id="OsZS97_07G019360_01">
    <property type="protein sequence ID" value="OsZS97_07G019360_01"/>
    <property type="gene ID" value="OsZS97_07G019360"/>
</dbReference>
<dbReference type="Gramene" id="BGIOSGA024071-TA">
    <property type="protein sequence ID" value="BGIOSGA024071-PA"/>
    <property type="gene ID" value="BGIOSGA024071"/>
</dbReference>
<dbReference type="Gramene" id="OsIR64_07g0020160.01">
    <property type="protein sequence ID" value="OsIR64_07g0020160.01"/>
    <property type="gene ID" value="OsIR64_07g0020160"/>
</dbReference>
<dbReference type="Gramene" id="OsKYG_07g0019590.01">
    <property type="protein sequence ID" value="OsKYG_07g0019590.01"/>
    <property type="gene ID" value="OsKYG_07g0019590"/>
</dbReference>
<dbReference type="Gramene" id="OsLiXu_07g0019710.01">
    <property type="protein sequence ID" value="OsLiXu_07g0019710.01"/>
    <property type="gene ID" value="OsLiXu_07g0019710"/>
</dbReference>
<dbReference type="Gramene" id="OsMH63_07G019430_01">
    <property type="protein sequence ID" value="OsMH63_07G019430_01"/>
    <property type="gene ID" value="OsMH63_07G019430"/>
</dbReference>
<dbReference type="Gramene" id="OsPr106_07g0019690.01">
    <property type="protein sequence ID" value="OsPr106_07g0019690.01"/>
    <property type="gene ID" value="OsPr106_07g0019690"/>
</dbReference>
<dbReference type="Gramene" id="OsZS97_07G019360_01">
    <property type="protein sequence ID" value="OsZS97_07G019360_01"/>
    <property type="gene ID" value="OsZS97_07G019360"/>
</dbReference>
<dbReference type="HOGENOM" id="CLU_035664_8_1_1"/>
<dbReference type="OMA" id="HHAIMGA"/>
<dbReference type="Proteomes" id="UP000007015">
    <property type="component" value="Chromosome 7"/>
</dbReference>
<dbReference type="GO" id="GO:0005634">
    <property type="term" value="C:nucleus"/>
    <property type="evidence" value="ECO:0007669"/>
    <property type="project" value="UniProtKB-SubCell"/>
</dbReference>
<dbReference type="GO" id="GO:0003677">
    <property type="term" value="F:DNA binding"/>
    <property type="evidence" value="ECO:0007669"/>
    <property type="project" value="UniProtKB-KW"/>
</dbReference>
<dbReference type="GO" id="GO:0006355">
    <property type="term" value="P:regulation of DNA-templated transcription"/>
    <property type="evidence" value="ECO:0007669"/>
    <property type="project" value="InterPro"/>
</dbReference>
<dbReference type="GO" id="GO:0048731">
    <property type="term" value="P:system development"/>
    <property type="evidence" value="ECO:0007669"/>
    <property type="project" value="TreeGrafter"/>
</dbReference>
<dbReference type="FunFam" id="2.170.150.80:FF:000005">
    <property type="entry name" value="NAC transcription factor 56"/>
    <property type="match status" value="1"/>
</dbReference>
<dbReference type="Gene3D" id="2.170.150.80">
    <property type="entry name" value="NAC domain"/>
    <property type="match status" value="1"/>
</dbReference>
<dbReference type="InterPro" id="IPR003441">
    <property type="entry name" value="NAC-dom"/>
</dbReference>
<dbReference type="InterPro" id="IPR036093">
    <property type="entry name" value="NAC_dom_sf"/>
</dbReference>
<dbReference type="PANTHER" id="PTHR31719:SF248">
    <property type="entry name" value="NAC DOMAIN-CONTAINING PROTEIN 10"/>
    <property type="match status" value="1"/>
</dbReference>
<dbReference type="PANTHER" id="PTHR31719">
    <property type="entry name" value="NAC TRANSCRIPTION FACTOR 56"/>
    <property type="match status" value="1"/>
</dbReference>
<dbReference type="Pfam" id="PF02365">
    <property type="entry name" value="NAM"/>
    <property type="match status" value="1"/>
</dbReference>
<dbReference type="SUPFAM" id="SSF101941">
    <property type="entry name" value="NAC domain"/>
    <property type="match status" value="1"/>
</dbReference>
<dbReference type="PROSITE" id="PS51005">
    <property type="entry name" value="NAC"/>
    <property type="match status" value="1"/>
</dbReference>